<reference key="1">
    <citation type="submission" date="2009-02" db="EMBL/GenBank/DDBJ databases">
        <title>Genome sequence of Bacillus cereus 03BB102.</title>
        <authorList>
            <person name="Dodson R.J."/>
            <person name="Jackson P."/>
            <person name="Munk A.C."/>
            <person name="Brettin T."/>
            <person name="Bruce D."/>
            <person name="Detter C."/>
            <person name="Tapia R."/>
            <person name="Han C."/>
            <person name="Sutton G."/>
            <person name="Sims D."/>
        </authorList>
    </citation>
    <scope>NUCLEOTIDE SEQUENCE [LARGE SCALE GENOMIC DNA]</scope>
    <source>
        <strain>03BB102</strain>
    </source>
</reference>
<gene>
    <name evidence="1" type="primary">argR</name>
    <name type="ordered locus">BCA_4284</name>
</gene>
<sequence>MNKGQRHIKIREIIANKEIETQDELVDILRNEGFNVTQATVSRDIKELHLVKVPLHDGRYKYSLPADQRFNPLQKLKRNLVDSFVKLDTAGHMLVLKTLPGNAHSLGALIDHLEWDEIIGTICGDDTCLIICRTPEDTGVVSDRFLNML</sequence>
<name>ARGR_BACC3</name>
<organism>
    <name type="scientific">Bacillus cereus (strain 03BB102)</name>
    <dbReference type="NCBI Taxonomy" id="572264"/>
    <lineage>
        <taxon>Bacteria</taxon>
        <taxon>Bacillati</taxon>
        <taxon>Bacillota</taxon>
        <taxon>Bacilli</taxon>
        <taxon>Bacillales</taxon>
        <taxon>Bacillaceae</taxon>
        <taxon>Bacillus</taxon>
        <taxon>Bacillus cereus group</taxon>
    </lineage>
</organism>
<comment type="function">
    <text evidence="1">Regulates arginine biosynthesis genes.</text>
</comment>
<comment type="pathway">
    <text>Amino-acid biosynthesis; L-arginine biosynthesis [regulation].</text>
</comment>
<comment type="subcellular location">
    <subcellularLocation>
        <location evidence="1">Cytoplasm</location>
    </subcellularLocation>
</comment>
<comment type="similarity">
    <text evidence="1">Belongs to the ArgR family.</text>
</comment>
<keyword id="KW-0028">Amino-acid biosynthesis</keyword>
<keyword id="KW-0055">Arginine biosynthesis</keyword>
<keyword id="KW-0963">Cytoplasm</keyword>
<keyword id="KW-0238">DNA-binding</keyword>
<keyword id="KW-0678">Repressor</keyword>
<keyword id="KW-0804">Transcription</keyword>
<keyword id="KW-0805">Transcription regulation</keyword>
<accession>C1ERP8</accession>
<dbReference type="EMBL" id="CP001407">
    <property type="protein sequence ID" value="ACO30249.1"/>
    <property type="molecule type" value="Genomic_DNA"/>
</dbReference>
<dbReference type="RefSeq" id="WP_001032581.1">
    <property type="nucleotide sequence ID" value="NZ_CP009318.1"/>
</dbReference>
<dbReference type="SMR" id="C1ERP8"/>
<dbReference type="GeneID" id="93006927"/>
<dbReference type="KEGG" id="bcx:BCA_4284"/>
<dbReference type="PATRIC" id="fig|572264.18.peg.4235"/>
<dbReference type="UniPathway" id="UPA00068"/>
<dbReference type="Proteomes" id="UP000002210">
    <property type="component" value="Chromosome"/>
</dbReference>
<dbReference type="GO" id="GO:0005737">
    <property type="term" value="C:cytoplasm"/>
    <property type="evidence" value="ECO:0007669"/>
    <property type="project" value="UniProtKB-SubCell"/>
</dbReference>
<dbReference type="GO" id="GO:0034618">
    <property type="term" value="F:arginine binding"/>
    <property type="evidence" value="ECO:0007669"/>
    <property type="project" value="InterPro"/>
</dbReference>
<dbReference type="GO" id="GO:0003677">
    <property type="term" value="F:DNA binding"/>
    <property type="evidence" value="ECO:0007669"/>
    <property type="project" value="UniProtKB-KW"/>
</dbReference>
<dbReference type="GO" id="GO:0003700">
    <property type="term" value="F:DNA-binding transcription factor activity"/>
    <property type="evidence" value="ECO:0007669"/>
    <property type="project" value="UniProtKB-UniRule"/>
</dbReference>
<dbReference type="GO" id="GO:0006526">
    <property type="term" value="P:L-arginine biosynthetic process"/>
    <property type="evidence" value="ECO:0007669"/>
    <property type="project" value="UniProtKB-UniPathway"/>
</dbReference>
<dbReference type="GO" id="GO:0051259">
    <property type="term" value="P:protein complex oligomerization"/>
    <property type="evidence" value="ECO:0007669"/>
    <property type="project" value="InterPro"/>
</dbReference>
<dbReference type="GO" id="GO:1900079">
    <property type="term" value="P:regulation of arginine biosynthetic process"/>
    <property type="evidence" value="ECO:0007669"/>
    <property type="project" value="UniProtKB-UniRule"/>
</dbReference>
<dbReference type="FunFam" id="1.10.10.10:FF:000172">
    <property type="entry name" value="Arginine repressor"/>
    <property type="match status" value="1"/>
</dbReference>
<dbReference type="FunFam" id="3.30.1360.40:FF:000006">
    <property type="entry name" value="Arginine repressor"/>
    <property type="match status" value="1"/>
</dbReference>
<dbReference type="Gene3D" id="3.30.1360.40">
    <property type="match status" value="1"/>
</dbReference>
<dbReference type="Gene3D" id="1.10.10.10">
    <property type="entry name" value="Winged helix-like DNA-binding domain superfamily/Winged helix DNA-binding domain"/>
    <property type="match status" value="1"/>
</dbReference>
<dbReference type="HAMAP" id="MF_00173">
    <property type="entry name" value="Arg_repressor"/>
    <property type="match status" value="1"/>
</dbReference>
<dbReference type="InterPro" id="IPR001669">
    <property type="entry name" value="Arg_repress"/>
</dbReference>
<dbReference type="InterPro" id="IPR020899">
    <property type="entry name" value="Arg_repress_C"/>
</dbReference>
<dbReference type="InterPro" id="IPR036251">
    <property type="entry name" value="Arg_repress_C_sf"/>
</dbReference>
<dbReference type="InterPro" id="IPR020900">
    <property type="entry name" value="Arg_repress_DNA-bd"/>
</dbReference>
<dbReference type="InterPro" id="IPR036388">
    <property type="entry name" value="WH-like_DNA-bd_sf"/>
</dbReference>
<dbReference type="InterPro" id="IPR036390">
    <property type="entry name" value="WH_DNA-bd_sf"/>
</dbReference>
<dbReference type="NCBIfam" id="TIGR01529">
    <property type="entry name" value="argR_whole"/>
    <property type="match status" value="1"/>
</dbReference>
<dbReference type="NCBIfam" id="NF003281">
    <property type="entry name" value="PRK04280.1"/>
    <property type="match status" value="1"/>
</dbReference>
<dbReference type="PANTHER" id="PTHR34471">
    <property type="entry name" value="ARGININE REPRESSOR"/>
    <property type="match status" value="1"/>
</dbReference>
<dbReference type="PANTHER" id="PTHR34471:SF1">
    <property type="entry name" value="ARGININE REPRESSOR"/>
    <property type="match status" value="1"/>
</dbReference>
<dbReference type="Pfam" id="PF01316">
    <property type="entry name" value="Arg_repressor"/>
    <property type="match status" value="1"/>
</dbReference>
<dbReference type="Pfam" id="PF02863">
    <property type="entry name" value="Arg_repressor_C"/>
    <property type="match status" value="1"/>
</dbReference>
<dbReference type="PRINTS" id="PR01467">
    <property type="entry name" value="ARGREPRESSOR"/>
</dbReference>
<dbReference type="SUPFAM" id="SSF55252">
    <property type="entry name" value="C-terminal domain of arginine repressor"/>
    <property type="match status" value="1"/>
</dbReference>
<dbReference type="SUPFAM" id="SSF46785">
    <property type="entry name" value="Winged helix' DNA-binding domain"/>
    <property type="match status" value="1"/>
</dbReference>
<evidence type="ECO:0000255" key="1">
    <source>
        <dbReference type="HAMAP-Rule" id="MF_00173"/>
    </source>
</evidence>
<protein>
    <recommendedName>
        <fullName evidence="1">Arginine repressor</fullName>
    </recommendedName>
</protein>
<proteinExistence type="inferred from homology"/>
<feature type="chain" id="PRO_1000123785" description="Arginine repressor">
    <location>
        <begin position="1"/>
        <end position="149"/>
    </location>
</feature>